<name>RL4B_CANAL</name>
<comment type="function">
    <text evidence="4">Component of the ribosome, a large ribonucleoprotein complex responsible for the synthesis of proteins in the cell. The small ribosomal subunit (SSU) binds messenger RNAs (mRNAs) and translates the encoded message by selecting cognate aminoacyl-transfer RNA (tRNA) molecules. The large subunit (LSU) contains the ribosomal catalytic site termed the peptidyl transferase center (PTC), which catalyzes the formation of peptide bonds, thereby polymerizing the amino acids delivered by tRNAs into a polypeptide chain. The nascent polypeptides leave the ribosome through a tunnel in the LSU and interact with protein factors that function in enzymatic processing, targeting, and the membrane insertion of nascent chains at the exit of the ribosomal tunnel.</text>
</comment>
<comment type="subunit">
    <text evidence="1">Component of the large ribosomal subunit (PubMed:35613268). Mature ribosomes consist of a small (40S) and a large (60S) subunit (PubMed:35613268). The 40S subunit contains about 32 different proteins and 1 molecule of RNA (18S) (PubMed:35613268). The 60S subunit contains 45 different proteins and 3 molecules of RNA (25S, 5.8S and 5S) (PubMed:35613268).</text>
</comment>
<comment type="subcellular location">
    <subcellularLocation>
        <location evidence="4">Cytoplasm</location>
    </subcellularLocation>
</comment>
<comment type="similarity">
    <text evidence="3">Belongs to the universal ribosomal protein uL4 family.</text>
</comment>
<evidence type="ECO:0000269" key="1">
    <source>
    </source>
</evidence>
<evidence type="ECO:0000303" key="2">
    <source>
    </source>
</evidence>
<evidence type="ECO:0000305" key="3"/>
<evidence type="ECO:0000305" key="4">
    <source>
    </source>
</evidence>
<evidence type="ECO:0007744" key="5">
    <source>
        <dbReference type="PDB" id="7PZY"/>
    </source>
</evidence>
<evidence type="ECO:0007744" key="6">
    <source>
        <dbReference type="PDB" id="7Q0F"/>
    </source>
</evidence>
<evidence type="ECO:0007744" key="7">
    <source>
        <dbReference type="PDB" id="7Q0P"/>
    </source>
</evidence>
<proteinExistence type="evidence at protein level"/>
<organism>
    <name type="scientific">Candida albicans (strain SC5314 / ATCC MYA-2876)</name>
    <name type="common">Yeast</name>
    <dbReference type="NCBI Taxonomy" id="237561"/>
    <lineage>
        <taxon>Eukaryota</taxon>
        <taxon>Fungi</taxon>
        <taxon>Dikarya</taxon>
        <taxon>Ascomycota</taxon>
        <taxon>Saccharomycotina</taxon>
        <taxon>Pichiomycetes</taxon>
        <taxon>Debaryomycetaceae</taxon>
        <taxon>Candida/Lodderomyces clade</taxon>
        <taxon>Candida</taxon>
    </lineage>
</organism>
<dbReference type="EMBL" id="CP017623">
    <property type="protein sequence ID" value="AOW27011.1"/>
    <property type="molecule type" value="Genomic_DNA"/>
</dbReference>
<dbReference type="RefSeq" id="XP_715018.1">
    <property type="nucleotide sequence ID" value="XM_709925.1"/>
</dbReference>
<dbReference type="PDB" id="7PZY">
    <property type="method" value="EM"/>
    <property type="resolution" value="2.32 A"/>
    <property type="chains" value="l=1-363"/>
</dbReference>
<dbReference type="PDB" id="7Q08">
    <property type="method" value="EM"/>
    <property type="resolution" value="2.56 A"/>
    <property type="chains" value="l=1-363"/>
</dbReference>
<dbReference type="PDB" id="7Q0F">
    <property type="method" value="EM"/>
    <property type="resolution" value="2.64 A"/>
    <property type="chains" value="l=1-363"/>
</dbReference>
<dbReference type="PDB" id="7Q0P">
    <property type="method" value="EM"/>
    <property type="resolution" value="2.77 A"/>
    <property type="chains" value="l=1-363"/>
</dbReference>
<dbReference type="PDB" id="7Q0R">
    <property type="method" value="EM"/>
    <property type="resolution" value="2.67 A"/>
    <property type="chains" value="l=1-363"/>
</dbReference>
<dbReference type="PDB" id="8C3A">
    <property type="method" value="X-ray"/>
    <property type="resolution" value="3.00 A"/>
    <property type="chains" value="AY/l=1-363"/>
</dbReference>
<dbReference type="PDB" id="8OGJ">
    <property type="method" value="EM"/>
    <property type="resolution" value="3.10 A"/>
    <property type="chains" value="l=1-363"/>
</dbReference>
<dbReference type="PDB" id="8OH6">
    <property type="method" value="X-ray"/>
    <property type="resolution" value="3.35 A"/>
    <property type="chains" value="AY/l=1-363"/>
</dbReference>
<dbReference type="PDB" id="8OI5">
    <property type="method" value="X-ray"/>
    <property type="resolution" value="2.90 A"/>
    <property type="chains" value="AY/l=1-363"/>
</dbReference>
<dbReference type="PDB" id="8OJ3">
    <property type="method" value="X-ray"/>
    <property type="resolution" value="3.50 A"/>
    <property type="chains" value="AY/l=1-363"/>
</dbReference>
<dbReference type="PDBsum" id="7PZY"/>
<dbReference type="PDBsum" id="7Q08"/>
<dbReference type="PDBsum" id="7Q0F"/>
<dbReference type="PDBsum" id="7Q0P"/>
<dbReference type="PDBsum" id="7Q0R"/>
<dbReference type="PDBsum" id="8C3A"/>
<dbReference type="PDBsum" id="8OGJ"/>
<dbReference type="PDBsum" id="8OH6"/>
<dbReference type="PDBsum" id="8OI5"/>
<dbReference type="PDBsum" id="8OJ3"/>
<dbReference type="SMR" id="A0A1D8PFV1"/>
<dbReference type="FunCoup" id="A0A1D8PFV1">
    <property type="interactions" value="1585"/>
</dbReference>
<dbReference type="STRING" id="237561.A0A1D8PFV1"/>
<dbReference type="EnsemblFungi" id="C1_14110C_A-T">
    <property type="protein sequence ID" value="C1_14110C_A-T-p1"/>
    <property type="gene ID" value="C1_14110C_A"/>
</dbReference>
<dbReference type="GeneID" id="3643347"/>
<dbReference type="KEGG" id="cal:CAALFM_C114110CA"/>
<dbReference type="CGD" id="CAL0000176632">
    <property type="gene designation" value="RPL4B"/>
</dbReference>
<dbReference type="VEuPathDB" id="FungiDB:C1_14110C_A"/>
<dbReference type="eggNOG" id="KOG1475">
    <property type="taxonomic scope" value="Eukaryota"/>
</dbReference>
<dbReference type="InParanoid" id="A0A1D8PFV1"/>
<dbReference type="OMA" id="ALYGTWR"/>
<dbReference type="OrthoDB" id="10259785at2759"/>
<dbReference type="Proteomes" id="UP000000559">
    <property type="component" value="Chromosome 1"/>
</dbReference>
<dbReference type="GO" id="GO:0009986">
    <property type="term" value="C:cell surface"/>
    <property type="evidence" value="ECO:0000314"/>
    <property type="project" value="CGD"/>
</dbReference>
<dbReference type="GO" id="GO:0022625">
    <property type="term" value="C:cytosolic large ribosomal subunit"/>
    <property type="evidence" value="ECO:0000318"/>
    <property type="project" value="GO_Central"/>
</dbReference>
<dbReference type="GO" id="GO:0016020">
    <property type="term" value="C:membrane"/>
    <property type="evidence" value="ECO:0000314"/>
    <property type="project" value="CGD"/>
</dbReference>
<dbReference type="GO" id="GO:0003723">
    <property type="term" value="F:RNA binding"/>
    <property type="evidence" value="ECO:0000318"/>
    <property type="project" value="GO_Central"/>
</dbReference>
<dbReference type="GO" id="GO:0003735">
    <property type="term" value="F:structural constituent of ribosome"/>
    <property type="evidence" value="ECO:0000318"/>
    <property type="project" value="GO_Central"/>
</dbReference>
<dbReference type="GO" id="GO:0006412">
    <property type="term" value="P:translation"/>
    <property type="evidence" value="ECO:0007669"/>
    <property type="project" value="InterPro"/>
</dbReference>
<dbReference type="FunFam" id="3.40.1370.10:FF:000002">
    <property type="entry name" value="60S ribosomal protein L4"/>
    <property type="match status" value="1"/>
</dbReference>
<dbReference type="Gene3D" id="3.40.1370.10">
    <property type="match status" value="1"/>
</dbReference>
<dbReference type="InterPro" id="IPR025755">
    <property type="entry name" value="Ribos_uL4_C_dom"/>
</dbReference>
<dbReference type="InterPro" id="IPR002136">
    <property type="entry name" value="Ribosomal_uL4"/>
</dbReference>
<dbReference type="InterPro" id="IPR023574">
    <property type="entry name" value="Ribosomal_uL4_dom_sf"/>
</dbReference>
<dbReference type="InterPro" id="IPR013000">
    <property type="entry name" value="Ribosomal_uL4_euk/arc_CS"/>
</dbReference>
<dbReference type="InterPro" id="IPR045240">
    <property type="entry name" value="Ribosomal_uL4_euk/arch"/>
</dbReference>
<dbReference type="PANTHER" id="PTHR19431">
    <property type="entry name" value="60S RIBOSOMAL PROTEIN L4"/>
    <property type="match status" value="1"/>
</dbReference>
<dbReference type="Pfam" id="PF14374">
    <property type="entry name" value="Ribos_L4_asso_C"/>
    <property type="match status" value="1"/>
</dbReference>
<dbReference type="Pfam" id="PF00573">
    <property type="entry name" value="Ribosomal_L4"/>
    <property type="match status" value="1"/>
</dbReference>
<dbReference type="SUPFAM" id="SSF52166">
    <property type="entry name" value="Ribosomal protein L4"/>
    <property type="match status" value="1"/>
</dbReference>
<dbReference type="PROSITE" id="PS00939">
    <property type="entry name" value="RIBOSOMAL_L1E"/>
    <property type="match status" value="1"/>
</dbReference>
<protein>
    <recommendedName>
        <fullName evidence="2">Large ribosomal subunit protein uL4</fullName>
    </recommendedName>
    <alternativeName>
        <fullName>60S ribosomal protein L4-B</fullName>
    </alternativeName>
</protein>
<keyword id="KW-0002">3D-structure</keyword>
<keyword id="KW-0963">Cytoplasm</keyword>
<keyword id="KW-1185">Reference proteome</keyword>
<keyword id="KW-0687">Ribonucleoprotein</keyword>
<keyword id="KW-0689">Ribosomal protein</keyword>
<sequence>MSSRPQVSVISVKGEQGSSQLPLPAVFAAPVRPDLVHSVFVRVNKNKRQAYAVAENAGHQTSAESWGTGRAVARIPRVGGGGTHRSGQAAFGNMCRGGRMFAPTKTWRRWNVKVNHNEKRYATASAIAASAVTSLVLARGHRVEQVKELPLVVSNEFESVTKTKDAVAVLKAVGAHKDVVKVIKSKKLRAGKGKLRGRRFTQRRGPLVVYAQDNGIVKALRNVPGVETASVKHLGLLQLAPGAHLGRFIIWTQGAFESLDSVYGSDSTKSIKSGYTLPSNIISNTDVTRLINSAEVQAVVRPAGEKTQKKSHVLKKNPLKNKQVLLRLNPYAKAYAAEKVGSAKVEQAKVKPSKGQFAEVLKN</sequence>
<accession>A0A1D8PFV1</accession>
<gene>
    <name evidence="2" type="primary">RPL4B</name>
    <name type="synonym">RPL4</name>
    <name type="ordered locus">orf19.7217</name>
    <name type="ORF">CAALFM_C114110CA</name>
</gene>
<reference key="1">
    <citation type="journal article" date="2004" name="Proc. Natl. Acad. Sci. U.S.A.">
        <title>The diploid genome sequence of Candida albicans.</title>
        <authorList>
            <person name="Jones T."/>
            <person name="Federspiel N.A."/>
            <person name="Chibana H."/>
            <person name="Dungan J."/>
            <person name="Kalman S."/>
            <person name="Magee B.B."/>
            <person name="Newport G."/>
            <person name="Thorstenson Y.R."/>
            <person name="Agabian N."/>
            <person name="Magee P.T."/>
            <person name="Davis R.W."/>
            <person name="Scherer S."/>
        </authorList>
    </citation>
    <scope>NUCLEOTIDE SEQUENCE [LARGE SCALE GENOMIC DNA]</scope>
    <source>
        <strain>SC5314 / ATCC MYA-2876</strain>
    </source>
</reference>
<reference key="2">
    <citation type="journal article" date="2007" name="Genome Biol.">
        <title>Assembly of the Candida albicans genome into sixteen supercontigs aligned on the eight chromosomes.</title>
        <authorList>
            <person name="van het Hoog M."/>
            <person name="Rast T.J."/>
            <person name="Martchenko M."/>
            <person name="Grindle S."/>
            <person name="Dignard D."/>
            <person name="Hogues H."/>
            <person name="Cuomo C."/>
            <person name="Berriman M."/>
            <person name="Scherer S."/>
            <person name="Magee B.B."/>
            <person name="Whiteway M."/>
            <person name="Chibana H."/>
            <person name="Nantel A."/>
            <person name="Magee P.T."/>
        </authorList>
    </citation>
    <scope>GENOME REANNOTATION</scope>
    <source>
        <strain>SC5314 / ATCC MYA-2876</strain>
    </source>
</reference>
<reference key="3">
    <citation type="journal article" date="2013" name="Genome Biol.">
        <title>Assembly of a phased diploid Candida albicans genome facilitates allele-specific measurements and provides a simple model for repeat and indel structure.</title>
        <authorList>
            <person name="Muzzey D."/>
            <person name="Schwartz K."/>
            <person name="Weissman J.S."/>
            <person name="Sherlock G."/>
        </authorList>
    </citation>
    <scope>NUCLEOTIDE SEQUENCE [LARGE SCALE GENOMIC DNA]</scope>
    <scope>GENOME REANNOTATION</scope>
    <source>
        <strain>SC5314 / ATCC MYA-2876</strain>
    </source>
</reference>
<reference evidence="5 6 7" key="4">
    <citation type="journal article" date="2022" name="Sci. Adv.">
        <title>E-site drug specificity of the human pathogen Candida albicans ribosome.</title>
        <authorList>
            <person name="Zgadzay Y."/>
            <person name="Kolosova O."/>
            <person name="Stetsenko A."/>
            <person name="Wu C."/>
            <person name="Bruchlen D."/>
            <person name="Usachev K."/>
            <person name="Validov S."/>
            <person name="Jenner L."/>
            <person name="Rogachev A."/>
            <person name="Yusupova G."/>
            <person name="Sachs M.S."/>
            <person name="Guskov A."/>
            <person name="Yusupov M."/>
        </authorList>
    </citation>
    <scope>STRUCTURE BY ELECTRON MICROSCOPY (2.32 ANGSTROMS) OF THE 80S RIBOSOME</scope>
    <scope>SUBUNIT</scope>
</reference>
<feature type="chain" id="PRO_0000456489" description="Large ribosomal subunit protein uL4">
    <location>
        <begin position="1"/>
        <end position="363"/>
    </location>
</feature>